<proteinExistence type="inferred from homology"/>
<feature type="chain" id="PRO_0000227434" description="UvrABC system protein C">
    <location>
        <begin position="1"/>
        <end position="628"/>
    </location>
</feature>
<feature type="domain" description="GIY-YIG" evidence="1">
    <location>
        <begin position="20"/>
        <end position="99"/>
    </location>
</feature>
<feature type="domain" description="UVR" evidence="1">
    <location>
        <begin position="209"/>
        <end position="244"/>
    </location>
</feature>
<protein>
    <recommendedName>
        <fullName evidence="1">UvrABC system protein C</fullName>
        <shortName evidence="1">Protein UvrC</shortName>
    </recommendedName>
    <alternativeName>
        <fullName evidence="1">Excinuclease ABC subunit C</fullName>
    </alternativeName>
</protein>
<dbReference type="EMBL" id="BA000045">
    <property type="protein sequence ID" value="BAC91533.1"/>
    <property type="molecule type" value="Genomic_DNA"/>
</dbReference>
<dbReference type="RefSeq" id="NP_926538.1">
    <property type="nucleotide sequence ID" value="NC_005125.1"/>
</dbReference>
<dbReference type="RefSeq" id="WP_011143581.1">
    <property type="nucleotide sequence ID" value="NC_005125.1"/>
</dbReference>
<dbReference type="SMR" id="Q7NFD4"/>
<dbReference type="FunCoup" id="Q7NFD4">
    <property type="interactions" value="37"/>
</dbReference>
<dbReference type="STRING" id="251221.gene:10761107"/>
<dbReference type="EnsemblBacteria" id="BAC91533">
    <property type="protein sequence ID" value="BAC91533"/>
    <property type="gene ID" value="BAC91533"/>
</dbReference>
<dbReference type="KEGG" id="gvi:gll3592"/>
<dbReference type="PATRIC" id="fig|251221.4.peg.3625"/>
<dbReference type="eggNOG" id="COG0322">
    <property type="taxonomic scope" value="Bacteria"/>
</dbReference>
<dbReference type="HOGENOM" id="CLU_014841_3_2_3"/>
<dbReference type="InParanoid" id="Q7NFD4"/>
<dbReference type="OrthoDB" id="9804933at2"/>
<dbReference type="PhylomeDB" id="Q7NFD4"/>
<dbReference type="Proteomes" id="UP000000557">
    <property type="component" value="Chromosome"/>
</dbReference>
<dbReference type="GO" id="GO:0005737">
    <property type="term" value="C:cytoplasm"/>
    <property type="evidence" value="ECO:0007669"/>
    <property type="project" value="UniProtKB-SubCell"/>
</dbReference>
<dbReference type="GO" id="GO:0009380">
    <property type="term" value="C:excinuclease repair complex"/>
    <property type="evidence" value="ECO:0000318"/>
    <property type="project" value="GO_Central"/>
</dbReference>
<dbReference type="GO" id="GO:0003677">
    <property type="term" value="F:DNA binding"/>
    <property type="evidence" value="ECO:0007669"/>
    <property type="project" value="UniProtKB-UniRule"/>
</dbReference>
<dbReference type="GO" id="GO:0009381">
    <property type="term" value="F:excinuclease ABC activity"/>
    <property type="evidence" value="ECO:0007669"/>
    <property type="project" value="UniProtKB-UniRule"/>
</dbReference>
<dbReference type="GO" id="GO:0006974">
    <property type="term" value="P:DNA damage response"/>
    <property type="evidence" value="ECO:0000318"/>
    <property type="project" value="GO_Central"/>
</dbReference>
<dbReference type="GO" id="GO:0006289">
    <property type="term" value="P:nucleotide-excision repair"/>
    <property type="evidence" value="ECO:0007669"/>
    <property type="project" value="UniProtKB-UniRule"/>
</dbReference>
<dbReference type="GO" id="GO:0009432">
    <property type="term" value="P:SOS response"/>
    <property type="evidence" value="ECO:0007669"/>
    <property type="project" value="UniProtKB-UniRule"/>
</dbReference>
<dbReference type="CDD" id="cd10434">
    <property type="entry name" value="GIY-YIG_UvrC_Cho"/>
    <property type="match status" value="1"/>
</dbReference>
<dbReference type="FunFam" id="3.30.420.340:FF:000003">
    <property type="entry name" value="UvrABC system protein C"/>
    <property type="match status" value="1"/>
</dbReference>
<dbReference type="FunFam" id="3.40.1440.10:FF:000001">
    <property type="entry name" value="UvrABC system protein C"/>
    <property type="match status" value="1"/>
</dbReference>
<dbReference type="Gene3D" id="1.10.150.20">
    <property type="entry name" value="5' to 3' exonuclease, C-terminal subdomain"/>
    <property type="match status" value="1"/>
</dbReference>
<dbReference type="Gene3D" id="3.40.1440.10">
    <property type="entry name" value="GIY-YIG endonuclease"/>
    <property type="match status" value="1"/>
</dbReference>
<dbReference type="Gene3D" id="4.10.860.10">
    <property type="entry name" value="UVR domain"/>
    <property type="match status" value="1"/>
</dbReference>
<dbReference type="Gene3D" id="3.30.420.340">
    <property type="entry name" value="UvrC, RNAse H endonuclease domain"/>
    <property type="match status" value="1"/>
</dbReference>
<dbReference type="HAMAP" id="MF_00203">
    <property type="entry name" value="UvrC"/>
    <property type="match status" value="1"/>
</dbReference>
<dbReference type="InterPro" id="IPR041663">
    <property type="entry name" value="DisA/LigA_HHH"/>
</dbReference>
<dbReference type="InterPro" id="IPR000305">
    <property type="entry name" value="GIY-YIG_endonuc"/>
</dbReference>
<dbReference type="InterPro" id="IPR035901">
    <property type="entry name" value="GIY-YIG_endonuc_sf"/>
</dbReference>
<dbReference type="InterPro" id="IPR047296">
    <property type="entry name" value="GIY-YIG_UvrC_Cho"/>
</dbReference>
<dbReference type="InterPro" id="IPR010994">
    <property type="entry name" value="RuvA_2-like"/>
</dbReference>
<dbReference type="InterPro" id="IPR001943">
    <property type="entry name" value="UVR_dom"/>
</dbReference>
<dbReference type="InterPro" id="IPR036876">
    <property type="entry name" value="UVR_dom_sf"/>
</dbReference>
<dbReference type="InterPro" id="IPR050066">
    <property type="entry name" value="UvrABC_protein_C"/>
</dbReference>
<dbReference type="InterPro" id="IPR004791">
    <property type="entry name" value="UvrC"/>
</dbReference>
<dbReference type="InterPro" id="IPR001162">
    <property type="entry name" value="UvrC_RNase_H_dom"/>
</dbReference>
<dbReference type="InterPro" id="IPR038476">
    <property type="entry name" value="UvrC_RNase_H_dom_sf"/>
</dbReference>
<dbReference type="NCBIfam" id="NF001824">
    <property type="entry name" value="PRK00558.1-5"/>
    <property type="match status" value="1"/>
</dbReference>
<dbReference type="NCBIfam" id="TIGR00194">
    <property type="entry name" value="uvrC"/>
    <property type="match status" value="1"/>
</dbReference>
<dbReference type="PANTHER" id="PTHR30562:SF1">
    <property type="entry name" value="UVRABC SYSTEM PROTEIN C"/>
    <property type="match status" value="1"/>
</dbReference>
<dbReference type="PANTHER" id="PTHR30562">
    <property type="entry name" value="UVRC/OXIDOREDUCTASE"/>
    <property type="match status" value="1"/>
</dbReference>
<dbReference type="Pfam" id="PF01541">
    <property type="entry name" value="GIY-YIG"/>
    <property type="match status" value="1"/>
</dbReference>
<dbReference type="Pfam" id="PF12826">
    <property type="entry name" value="HHH_2"/>
    <property type="match status" value="1"/>
</dbReference>
<dbReference type="Pfam" id="PF02151">
    <property type="entry name" value="UVR"/>
    <property type="match status" value="1"/>
</dbReference>
<dbReference type="Pfam" id="PF22920">
    <property type="entry name" value="UvrC_RNaseH"/>
    <property type="match status" value="1"/>
</dbReference>
<dbReference type="Pfam" id="PF08459">
    <property type="entry name" value="UvrC_RNaseH_dom"/>
    <property type="match status" value="1"/>
</dbReference>
<dbReference type="SMART" id="SM00465">
    <property type="entry name" value="GIYc"/>
    <property type="match status" value="1"/>
</dbReference>
<dbReference type="SUPFAM" id="SSF46600">
    <property type="entry name" value="C-terminal UvrC-binding domain of UvrB"/>
    <property type="match status" value="1"/>
</dbReference>
<dbReference type="SUPFAM" id="SSF82771">
    <property type="entry name" value="GIY-YIG endonuclease"/>
    <property type="match status" value="1"/>
</dbReference>
<dbReference type="SUPFAM" id="SSF47781">
    <property type="entry name" value="RuvA domain 2-like"/>
    <property type="match status" value="1"/>
</dbReference>
<dbReference type="PROSITE" id="PS50164">
    <property type="entry name" value="GIY_YIG"/>
    <property type="match status" value="1"/>
</dbReference>
<dbReference type="PROSITE" id="PS50151">
    <property type="entry name" value="UVR"/>
    <property type="match status" value="1"/>
</dbReference>
<dbReference type="PROSITE" id="PS50165">
    <property type="entry name" value="UVRC"/>
    <property type="match status" value="1"/>
</dbReference>
<accession>Q7NFD4</accession>
<comment type="function">
    <text evidence="1">The UvrABC repair system catalyzes the recognition and processing of DNA lesions. UvrC both incises the 5' and 3' sides of the lesion. The N-terminal half is responsible for the 3' incision and the C-terminal half is responsible for the 5' incision.</text>
</comment>
<comment type="subunit">
    <text evidence="1">Interacts with UvrB in an incision complex.</text>
</comment>
<comment type="subcellular location">
    <subcellularLocation>
        <location evidence="1">Cytoplasm</location>
    </subcellularLocation>
</comment>
<comment type="similarity">
    <text evidence="1">Belongs to the UvrC family.</text>
</comment>
<evidence type="ECO:0000255" key="1">
    <source>
        <dbReference type="HAMAP-Rule" id="MF_00203"/>
    </source>
</evidence>
<keyword id="KW-0963">Cytoplasm</keyword>
<keyword id="KW-0227">DNA damage</keyword>
<keyword id="KW-0228">DNA excision</keyword>
<keyword id="KW-0234">DNA repair</keyword>
<keyword id="KW-0267">Excision nuclease</keyword>
<keyword id="KW-1185">Reference proteome</keyword>
<keyword id="KW-0742">SOS response</keyword>
<gene>
    <name evidence="1" type="primary">uvrC</name>
    <name type="ordered locus">gll3592</name>
</gene>
<reference key="1">
    <citation type="journal article" date="2003" name="DNA Res.">
        <title>Complete genome structure of Gloeobacter violaceus PCC 7421, a cyanobacterium that lacks thylakoids.</title>
        <authorList>
            <person name="Nakamura Y."/>
            <person name="Kaneko T."/>
            <person name="Sato S."/>
            <person name="Mimuro M."/>
            <person name="Miyashita H."/>
            <person name="Tsuchiya T."/>
            <person name="Sasamoto S."/>
            <person name="Watanabe A."/>
            <person name="Kawashima K."/>
            <person name="Kishida Y."/>
            <person name="Kiyokawa C."/>
            <person name="Kohara M."/>
            <person name="Matsumoto M."/>
            <person name="Matsuno A."/>
            <person name="Nakazaki N."/>
            <person name="Shimpo S."/>
            <person name="Takeuchi C."/>
            <person name="Yamada M."/>
            <person name="Tabata S."/>
        </authorList>
    </citation>
    <scope>NUCLEOTIDE SEQUENCE [LARGE SCALE GENOMIC DNA]</scope>
    <source>
        <strain>ATCC 29082 / PCC 7421</strain>
    </source>
</reference>
<sequence>MPNLIADPERLKERLELLPTSAGVYLMRDEAGEILYVGKAKNLRNRVRSYFQPGHDHSPRIAIMVGKVHDFELILTDTEAEALVLEDNLIKTHKPRYNVLLKDDKQYPYLCITWSEEYPRIFVTRRRGSGHPEDRYFGPYTDAGALHSTLGLLKKLFPLRQRNTPVFKDRPCINYEMGRCPGLCQRLISPQEYRATIRQIQMILQGRTAELLAQLEDQMQTAAAAMNFEHAARLRDRITGLNQLGAHQKITVPDSSVSRDAVALAADAALVSIQLFQVRSGKLIGRLGFSAAASGEDPGHILQRVLEEHYRASASEEIPLEVLTQHPLPEADILATWLAEKKGRKVEIHAPQRQIKAELVEMVARNAEAELQRLERFSRRQEKGLLNLAEALELPSVPRRMECYDISHIQGTDTVASRVVFVDGAPAKQYYRHYKIRDPRIVAGRPDDFASMAEVISRRFARAESEPEGDLPDLVVIDGGKGQLSAARAVMEELSYGDVPTIGLAKRLEEVFLPGRSDPVLIAQGDPALHLLQRIRDEAHRFAVSFHREQRGKRMTRSSLDDIPGIGPAKRKILLDTFRSVPVLEKASFEEIAKTPGIGSRLAQVIHTYFHGEPEAVARALEAEQAAN</sequence>
<organism>
    <name type="scientific">Gloeobacter violaceus (strain ATCC 29082 / PCC 7421)</name>
    <dbReference type="NCBI Taxonomy" id="251221"/>
    <lineage>
        <taxon>Bacteria</taxon>
        <taxon>Bacillati</taxon>
        <taxon>Cyanobacteriota</taxon>
        <taxon>Cyanophyceae</taxon>
        <taxon>Gloeobacterales</taxon>
        <taxon>Gloeobacteraceae</taxon>
        <taxon>Gloeobacter</taxon>
    </lineage>
</organism>
<name>UVRC_GLOVI</name>